<name>SYY_SULDN</name>
<reference key="1">
    <citation type="journal article" date="2008" name="Appl. Environ. Microbiol.">
        <title>Genome of the epsilonproteobacterial chemolithoautotroph Sulfurimonas denitrificans.</title>
        <authorList>
            <person name="Sievert S.M."/>
            <person name="Scott K.M."/>
            <person name="Klotz M.G."/>
            <person name="Chain P.S.G."/>
            <person name="Hauser L.J."/>
            <person name="Hemp J."/>
            <person name="Huegler M."/>
            <person name="Land M."/>
            <person name="Lapidus A."/>
            <person name="Larimer F.W."/>
            <person name="Lucas S."/>
            <person name="Malfatti S.A."/>
            <person name="Meyer F."/>
            <person name="Paulsen I.T."/>
            <person name="Ren Q."/>
            <person name="Simon J."/>
            <person name="Bailey K."/>
            <person name="Diaz E."/>
            <person name="Fitzpatrick K.A."/>
            <person name="Glover B."/>
            <person name="Gwatney N."/>
            <person name="Korajkic A."/>
            <person name="Long A."/>
            <person name="Mobberley J.M."/>
            <person name="Pantry S.N."/>
            <person name="Pazder G."/>
            <person name="Peterson S."/>
            <person name="Quintanilla J.D."/>
            <person name="Sprinkle R."/>
            <person name="Stephens J."/>
            <person name="Thomas P."/>
            <person name="Vaughn R."/>
            <person name="Weber M.J."/>
            <person name="Wooten L.L."/>
        </authorList>
    </citation>
    <scope>NUCLEOTIDE SEQUENCE [LARGE SCALE GENOMIC DNA]</scope>
    <source>
        <strain>ATCC 33889 / DSM 1251</strain>
    </source>
</reference>
<protein>
    <recommendedName>
        <fullName evidence="1">Tyrosine--tRNA ligase</fullName>
        <ecNumber evidence="1">6.1.1.1</ecNumber>
    </recommendedName>
    <alternativeName>
        <fullName evidence="1">Tyrosyl-tRNA synthetase</fullName>
        <shortName evidence="1">TyrRS</shortName>
    </alternativeName>
</protein>
<gene>
    <name evidence="1" type="primary">tyrS</name>
    <name type="ordered locus">Suden_0720</name>
</gene>
<keyword id="KW-0030">Aminoacyl-tRNA synthetase</keyword>
<keyword id="KW-0067">ATP-binding</keyword>
<keyword id="KW-0963">Cytoplasm</keyword>
<keyword id="KW-0436">Ligase</keyword>
<keyword id="KW-0547">Nucleotide-binding</keyword>
<keyword id="KW-0648">Protein biosynthesis</keyword>
<keyword id="KW-1185">Reference proteome</keyword>
<keyword id="KW-0694">RNA-binding</keyword>
<sequence length="399" mass="44650">MLKEAISEIQRGCAEIIDEPRVEKLLKAYFEKGETYTVKAGFDPTAPDLHLGHTVLLQKLAIFQKYGARVQFLIGDFTAQIGDPSGKSATRKILSTEDILENAKSYKEQVFKILDASKTDVVFNSEWLNALGASGMITLTTTFNVARMLERDDFDKRYKSGTSIAISEFLYPLLQGYDSVHLKSDIEVGGTDQKFNLLMGRHLQRSYDVGKEQAVLMVPILEGLDGVQKMSKSLGNYIGVSENPNEIFGKVLSISDELMWRYYELLSTKTLAEIERLKSGVEAGTLHPKKVKEELAIEITARFHSSESAQNAKDEFDRVHSNNQIPTEMDEFSSSEAISITKALVDCNLTPSTSQARRDIKQGAVRINQEKIDDETLSLESGEYILQVGKRKFAKLKVN</sequence>
<proteinExistence type="inferred from homology"/>
<accession>Q30SN2</accession>
<comment type="function">
    <text evidence="1">Catalyzes the attachment of tyrosine to tRNA(Tyr) in a two-step reaction: tyrosine is first activated by ATP to form Tyr-AMP and then transferred to the acceptor end of tRNA(Tyr).</text>
</comment>
<comment type="catalytic activity">
    <reaction evidence="1">
        <text>tRNA(Tyr) + L-tyrosine + ATP = L-tyrosyl-tRNA(Tyr) + AMP + diphosphate + H(+)</text>
        <dbReference type="Rhea" id="RHEA:10220"/>
        <dbReference type="Rhea" id="RHEA-COMP:9706"/>
        <dbReference type="Rhea" id="RHEA-COMP:9707"/>
        <dbReference type="ChEBI" id="CHEBI:15378"/>
        <dbReference type="ChEBI" id="CHEBI:30616"/>
        <dbReference type="ChEBI" id="CHEBI:33019"/>
        <dbReference type="ChEBI" id="CHEBI:58315"/>
        <dbReference type="ChEBI" id="CHEBI:78442"/>
        <dbReference type="ChEBI" id="CHEBI:78536"/>
        <dbReference type="ChEBI" id="CHEBI:456215"/>
        <dbReference type="EC" id="6.1.1.1"/>
    </reaction>
</comment>
<comment type="subunit">
    <text evidence="1">Homodimer.</text>
</comment>
<comment type="subcellular location">
    <subcellularLocation>
        <location evidence="1">Cytoplasm</location>
    </subcellularLocation>
</comment>
<comment type="similarity">
    <text evidence="1">Belongs to the class-I aminoacyl-tRNA synthetase family. TyrS type 2 subfamily.</text>
</comment>
<feature type="chain" id="PRO_0000236775" description="Tyrosine--tRNA ligase">
    <location>
        <begin position="1"/>
        <end position="399"/>
    </location>
</feature>
<feature type="domain" description="S4 RNA-binding" evidence="1">
    <location>
        <begin position="338"/>
        <end position="398"/>
    </location>
</feature>
<feature type="short sequence motif" description="'HIGH' region">
    <location>
        <begin position="44"/>
        <end position="53"/>
    </location>
</feature>
<feature type="short sequence motif" description="'KMSKS' region">
    <location>
        <begin position="229"/>
        <end position="233"/>
    </location>
</feature>
<feature type="binding site" evidence="1">
    <location>
        <position position="232"/>
    </location>
    <ligand>
        <name>ATP</name>
        <dbReference type="ChEBI" id="CHEBI:30616"/>
    </ligand>
</feature>
<evidence type="ECO:0000255" key="1">
    <source>
        <dbReference type="HAMAP-Rule" id="MF_02007"/>
    </source>
</evidence>
<organism>
    <name type="scientific">Sulfurimonas denitrificans (strain ATCC 33889 / DSM 1251)</name>
    <name type="common">Thiomicrospira denitrificans (strain ATCC 33889 / DSM 1251)</name>
    <dbReference type="NCBI Taxonomy" id="326298"/>
    <lineage>
        <taxon>Bacteria</taxon>
        <taxon>Pseudomonadati</taxon>
        <taxon>Campylobacterota</taxon>
        <taxon>Epsilonproteobacteria</taxon>
        <taxon>Campylobacterales</taxon>
        <taxon>Sulfurimonadaceae</taxon>
        <taxon>Sulfurimonas</taxon>
    </lineage>
</organism>
<dbReference type="EC" id="6.1.1.1" evidence="1"/>
<dbReference type="EMBL" id="CP000153">
    <property type="protein sequence ID" value="ABB43999.1"/>
    <property type="molecule type" value="Genomic_DNA"/>
</dbReference>
<dbReference type="RefSeq" id="WP_011372353.1">
    <property type="nucleotide sequence ID" value="NC_007575.1"/>
</dbReference>
<dbReference type="SMR" id="Q30SN2"/>
<dbReference type="STRING" id="326298.Suden_0720"/>
<dbReference type="KEGG" id="tdn:Suden_0720"/>
<dbReference type="eggNOG" id="COG0162">
    <property type="taxonomic scope" value="Bacteria"/>
</dbReference>
<dbReference type="HOGENOM" id="CLU_024003_5_0_7"/>
<dbReference type="OrthoDB" id="9804243at2"/>
<dbReference type="Proteomes" id="UP000002714">
    <property type="component" value="Chromosome"/>
</dbReference>
<dbReference type="GO" id="GO:0005829">
    <property type="term" value="C:cytosol"/>
    <property type="evidence" value="ECO:0007669"/>
    <property type="project" value="TreeGrafter"/>
</dbReference>
<dbReference type="GO" id="GO:0005524">
    <property type="term" value="F:ATP binding"/>
    <property type="evidence" value="ECO:0007669"/>
    <property type="project" value="UniProtKB-UniRule"/>
</dbReference>
<dbReference type="GO" id="GO:0003723">
    <property type="term" value="F:RNA binding"/>
    <property type="evidence" value="ECO:0007669"/>
    <property type="project" value="UniProtKB-KW"/>
</dbReference>
<dbReference type="GO" id="GO:0004831">
    <property type="term" value="F:tyrosine-tRNA ligase activity"/>
    <property type="evidence" value="ECO:0007669"/>
    <property type="project" value="UniProtKB-UniRule"/>
</dbReference>
<dbReference type="GO" id="GO:0006437">
    <property type="term" value="P:tyrosyl-tRNA aminoacylation"/>
    <property type="evidence" value="ECO:0007669"/>
    <property type="project" value="UniProtKB-UniRule"/>
</dbReference>
<dbReference type="CDD" id="cd00165">
    <property type="entry name" value="S4"/>
    <property type="match status" value="1"/>
</dbReference>
<dbReference type="CDD" id="cd00805">
    <property type="entry name" value="TyrRS_core"/>
    <property type="match status" value="1"/>
</dbReference>
<dbReference type="FunFam" id="1.10.240.10:FF:000006">
    <property type="entry name" value="Tyrosine--tRNA ligase"/>
    <property type="match status" value="1"/>
</dbReference>
<dbReference type="FunFam" id="3.40.50.620:FF:000061">
    <property type="entry name" value="Tyrosine--tRNA ligase"/>
    <property type="match status" value="1"/>
</dbReference>
<dbReference type="Gene3D" id="3.40.50.620">
    <property type="entry name" value="HUPs"/>
    <property type="match status" value="1"/>
</dbReference>
<dbReference type="Gene3D" id="3.10.290.10">
    <property type="entry name" value="RNA-binding S4 domain"/>
    <property type="match status" value="1"/>
</dbReference>
<dbReference type="Gene3D" id="1.10.240.10">
    <property type="entry name" value="Tyrosyl-Transfer RNA Synthetase"/>
    <property type="match status" value="1"/>
</dbReference>
<dbReference type="HAMAP" id="MF_02007">
    <property type="entry name" value="Tyr_tRNA_synth_type2"/>
    <property type="match status" value="1"/>
</dbReference>
<dbReference type="InterPro" id="IPR001412">
    <property type="entry name" value="aa-tRNA-synth_I_CS"/>
</dbReference>
<dbReference type="InterPro" id="IPR002305">
    <property type="entry name" value="aa-tRNA-synth_Ic"/>
</dbReference>
<dbReference type="InterPro" id="IPR014729">
    <property type="entry name" value="Rossmann-like_a/b/a_fold"/>
</dbReference>
<dbReference type="InterPro" id="IPR036986">
    <property type="entry name" value="S4_RNA-bd_sf"/>
</dbReference>
<dbReference type="InterPro" id="IPR054608">
    <property type="entry name" value="SYY-like_C"/>
</dbReference>
<dbReference type="InterPro" id="IPR002307">
    <property type="entry name" value="Tyr-tRNA-ligase"/>
</dbReference>
<dbReference type="InterPro" id="IPR024088">
    <property type="entry name" value="Tyr-tRNA-ligase_bac-type"/>
</dbReference>
<dbReference type="InterPro" id="IPR024108">
    <property type="entry name" value="Tyr-tRNA-ligase_bac_2"/>
</dbReference>
<dbReference type="NCBIfam" id="TIGR00234">
    <property type="entry name" value="tyrS"/>
    <property type="match status" value="1"/>
</dbReference>
<dbReference type="PANTHER" id="PTHR11766:SF1">
    <property type="entry name" value="TYROSINE--TRNA LIGASE"/>
    <property type="match status" value="1"/>
</dbReference>
<dbReference type="PANTHER" id="PTHR11766">
    <property type="entry name" value="TYROSYL-TRNA SYNTHETASE"/>
    <property type="match status" value="1"/>
</dbReference>
<dbReference type="Pfam" id="PF22421">
    <property type="entry name" value="SYY_C-terminal"/>
    <property type="match status" value="1"/>
</dbReference>
<dbReference type="Pfam" id="PF00579">
    <property type="entry name" value="tRNA-synt_1b"/>
    <property type="match status" value="1"/>
</dbReference>
<dbReference type="PRINTS" id="PR01040">
    <property type="entry name" value="TRNASYNTHTYR"/>
</dbReference>
<dbReference type="SUPFAM" id="SSF55174">
    <property type="entry name" value="Alpha-L RNA-binding motif"/>
    <property type="match status" value="1"/>
</dbReference>
<dbReference type="SUPFAM" id="SSF52374">
    <property type="entry name" value="Nucleotidylyl transferase"/>
    <property type="match status" value="1"/>
</dbReference>
<dbReference type="PROSITE" id="PS00178">
    <property type="entry name" value="AA_TRNA_LIGASE_I"/>
    <property type="match status" value="1"/>
</dbReference>
<dbReference type="PROSITE" id="PS50889">
    <property type="entry name" value="S4"/>
    <property type="match status" value="1"/>
</dbReference>